<dbReference type="EC" id="2.7.11.1" evidence="2"/>
<dbReference type="EC" id="2.7.2.3" evidence="2"/>
<dbReference type="EMBL" id="M31788">
    <property type="protein sequence ID" value="AAA41838.1"/>
    <property type="molecule type" value="mRNA"/>
</dbReference>
<dbReference type="EMBL" id="BC063161">
    <property type="protein sequence ID" value="AAH63161.1"/>
    <property type="molecule type" value="mRNA"/>
</dbReference>
<dbReference type="EMBL" id="BC087651">
    <property type="protein sequence ID" value="AAH87651.1"/>
    <property type="molecule type" value="mRNA"/>
</dbReference>
<dbReference type="PIR" id="A33792">
    <property type="entry name" value="A33792"/>
</dbReference>
<dbReference type="RefSeq" id="NP_445743.2">
    <property type="nucleotide sequence ID" value="NM_053291.3"/>
</dbReference>
<dbReference type="SMR" id="P16617"/>
<dbReference type="BioGRID" id="246779">
    <property type="interactions" value="6"/>
</dbReference>
<dbReference type="FunCoup" id="P16617">
    <property type="interactions" value="1663"/>
</dbReference>
<dbReference type="IntAct" id="P16617">
    <property type="interactions" value="5"/>
</dbReference>
<dbReference type="MINT" id="P16617"/>
<dbReference type="STRING" id="10116.ENSRNOP00000073523"/>
<dbReference type="ChEMBL" id="CHEMBL2176815"/>
<dbReference type="GlyGen" id="P16617">
    <property type="glycosylation" value="1 site, 1 O-linked glycan (1 site)"/>
</dbReference>
<dbReference type="iPTMnet" id="P16617"/>
<dbReference type="PhosphoSitePlus" id="P16617"/>
<dbReference type="SwissPalm" id="P16617"/>
<dbReference type="jPOST" id="P16617"/>
<dbReference type="PaxDb" id="10116-ENSRNOP00000003390"/>
<dbReference type="Ensembl" id="ENSRNOT00000077604.2">
    <property type="protein sequence ID" value="ENSRNOP00000073523.1"/>
    <property type="gene ID" value="ENSRNOG00000058249.2"/>
</dbReference>
<dbReference type="GeneID" id="24644"/>
<dbReference type="KEGG" id="rno:24644"/>
<dbReference type="UCSC" id="RGD:619878">
    <property type="organism name" value="rat"/>
</dbReference>
<dbReference type="AGR" id="RGD:619878"/>
<dbReference type="CTD" id="5230"/>
<dbReference type="RGD" id="619878">
    <property type="gene designation" value="Pgk1"/>
</dbReference>
<dbReference type="eggNOG" id="KOG1367">
    <property type="taxonomic scope" value="Eukaryota"/>
</dbReference>
<dbReference type="GeneTree" id="ENSGT00390000008820"/>
<dbReference type="HOGENOM" id="CLU_025427_0_0_1"/>
<dbReference type="InParanoid" id="P16617"/>
<dbReference type="OMA" id="DMIFDIG"/>
<dbReference type="OrthoDB" id="32034at9989"/>
<dbReference type="PhylomeDB" id="P16617"/>
<dbReference type="TreeFam" id="TF300489"/>
<dbReference type="Reactome" id="R-RNO-70171">
    <property type="pathway name" value="Glycolysis"/>
</dbReference>
<dbReference type="Reactome" id="R-RNO-70263">
    <property type="pathway name" value="Gluconeogenesis"/>
</dbReference>
<dbReference type="SABIO-RK" id="P16617"/>
<dbReference type="UniPathway" id="UPA00109">
    <property type="reaction ID" value="UER00185"/>
</dbReference>
<dbReference type="PRO" id="PR:P16617"/>
<dbReference type="Proteomes" id="UP000002494">
    <property type="component" value="Chromosome X"/>
</dbReference>
<dbReference type="Bgee" id="ENSRNOG00000058249">
    <property type="expression patterns" value="Expressed in quadriceps femoris and 20 other cell types or tissues"/>
</dbReference>
<dbReference type="ExpressionAtlas" id="P16617">
    <property type="expression patterns" value="baseline and differential"/>
</dbReference>
<dbReference type="GO" id="GO:0005829">
    <property type="term" value="C:cytosol"/>
    <property type="evidence" value="ECO:0000250"/>
    <property type="project" value="UniProtKB"/>
</dbReference>
<dbReference type="GO" id="GO:0005615">
    <property type="term" value="C:extracellular space"/>
    <property type="evidence" value="ECO:0000266"/>
    <property type="project" value="RGD"/>
</dbReference>
<dbReference type="GO" id="GO:0045121">
    <property type="term" value="C:membrane raft"/>
    <property type="evidence" value="ECO:0000266"/>
    <property type="project" value="RGD"/>
</dbReference>
<dbReference type="GO" id="GO:0005759">
    <property type="term" value="C:mitochondrial matrix"/>
    <property type="evidence" value="ECO:0000250"/>
    <property type="project" value="UniProtKB"/>
</dbReference>
<dbReference type="GO" id="GO:0043531">
    <property type="term" value="F:ADP binding"/>
    <property type="evidence" value="ECO:0000314"/>
    <property type="project" value="RGD"/>
</dbReference>
<dbReference type="GO" id="GO:0005524">
    <property type="term" value="F:ATP binding"/>
    <property type="evidence" value="ECO:0000315"/>
    <property type="project" value="RGD"/>
</dbReference>
<dbReference type="GO" id="GO:0046872">
    <property type="term" value="F:metal ion binding"/>
    <property type="evidence" value="ECO:0007669"/>
    <property type="project" value="UniProtKB-KW"/>
</dbReference>
<dbReference type="GO" id="GO:0004618">
    <property type="term" value="F:phosphoglycerate kinase activity"/>
    <property type="evidence" value="ECO:0000314"/>
    <property type="project" value="RGD"/>
</dbReference>
<dbReference type="GO" id="GO:0106310">
    <property type="term" value="F:protein serine kinase activity"/>
    <property type="evidence" value="ECO:0007669"/>
    <property type="project" value="RHEA"/>
</dbReference>
<dbReference type="GO" id="GO:0004674">
    <property type="term" value="F:protein serine/threonine kinase activity"/>
    <property type="evidence" value="ECO:0000266"/>
    <property type="project" value="RGD"/>
</dbReference>
<dbReference type="GO" id="GO:0047134">
    <property type="term" value="F:protein-disulfide reductase [NAD(P)H] activity"/>
    <property type="evidence" value="ECO:0000266"/>
    <property type="project" value="RGD"/>
</dbReference>
<dbReference type="GO" id="GO:0061621">
    <property type="term" value="P:canonical glycolysis"/>
    <property type="evidence" value="ECO:0000266"/>
    <property type="project" value="RGD"/>
</dbReference>
<dbReference type="GO" id="GO:0071456">
    <property type="term" value="P:cellular response to hypoxia"/>
    <property type="evidence" value="ECO:0000266"/>
    <property type="project" value="RGD"/>
</dbReference>
<dbReference type="GO" id="GO:0030855">
    <property type="term" value="P:epithelial cell differentiation"/>
    <property type="evidence" value="ECO:0000266"/>
    <property type="project" value="RGD"/>
</dbReference>
<dbReference type="GO" id="GO:0006094">
    <property type="term" value="P:gluconeogenesis"/>
    <property type="evidence" value="ECO:0000314"/>
    <property type="project" value="RGD"/>
</dbReference>
<dbReference type="GO" id="GO:0006096">
    <property type="term" value="P:glycolytic process"/>
    <property type="evidence" value="ECO:0000314"/>
    <property type="project" value="RGD"/>
</dbReference>
<dbReference type="GO" id="GO:0160218">
    <property type="term" value="P:negative regulation of acetyl-CoA biosynthetic process from pyruvate"/>
    <property type="evidence" value="ECO:0000266"/>
    <property type="project" value="RGD"/>
</dbReference>
<dbReference type="GO" id="GO:0016525">
    <property type="term" value="P:negative regulation of angiogenesis"/>
    <property type="evidence" value="ECO:0000266"/>
    <property type="project" value="RGD"/>
</dbReference>
<dbReference type="GO" id="GO:0031639">
    <property type="term" value="P:plasminogen activation"/>
    <property type="evidence" value="ECO:0000266"/>
    <property type="project" value="RGD"/>
</dbReference>
<dbReference type="CDD" id="cd00318">
    <property type="entry name" value="Phosphoglycerate_kinase"/>
    <property type="match status" value="1"/>
</dbReference>
<dbReference type="FunFam" id="3.40.50.1260:FF:000019">
    <property type="entry name" value="Phosphoglycerate kinase 1"/>
    <property type="match status" value="1"/>
</dbReference>
<dbReference type="FunFam" id="3.40.50.1260:FF:000031">
    <property type="entry name" value="Phosphoglycerate kinase 1"/>
    <property type="match status" value="1"/>
</dbReference>
<dbReference type="Gene3D" id="3.40.50.1260">
    <property type="entry name" value="Phosphoglycerate kinase, N-terminal domain"/>
    <property type="match status" value="3"/>
</dbReference>
<dbReference type="HAMAP" id="MF_00145">
    <property type="entry name" value="Phosphoglyc_kinase"/>
    <property type="match status" value="1"/>
</dbReference>
<dbReference type="InterPro" id="IPR001576">
    <property type="entry name" value="Phosphoglycerate_kinase"/>
</dbReference>
<dbReference type="InterPro" id="IPR015911">
    <property type="entry name" value="Phosphoglycerate_kinase_CS"/>
</dbReference>
<dbReference type="InterPro" id="IPR015824">
    <property type="entry name" value="Phosphoglycerate_kinase_N"/>
</dbReference>
<dbReference type="InterPro" id="IPR036043">
    <property type="entry name" value="Phosphoglycerate_kinase_sf"/>
</dbReference>
<dbReference type="PANTHER" id="PTHR11406">
    <property type="entry name" value="PHOSPHOGLYCERATE KINASE"/>
    <property type="match status" value="1"/>
</dbReference>
<dbReference type="PANTHER" id="PTHR11406:SF14">
    <property type="entry name" value="PHOSPHOGLYCERATE KINASE 1"/>
    <property type="match status" value="1"/>
</dbReference>
<dbReference type="Pfam" id="PF00162">
    <property type="entry name" value="PGK"/>
    <property type="match status" value="1"/>
</dbReference>
<dbReference type="PIRSF" id="PIRSF000724">
    <property type="entry name" value="Pgk"/>
    <property type="match status" value="1"/>
</dbReference>
<dbReference type="PRINTS" id="PR00477">
    <property type="entry name" value="PHGLYCKINASE"/>
</dbReference>
<dbReference type="SUPFAM" id="SSF53748">
    <property type="entry name" value="Phosphoglycerate kinase"/>
    <property type="match status" value="1"/>
</dbReference>
<dbReference type="PROSITE" id="PS00111">
    <property type="entry name" value="PGLYCERATE_KINASE"/>
    <property type="match status" value="1"/>
</dbReference>
<keyword id="KW-0007">Acetylation</keyword>
<keyword id="KW-0067">ATP-binding</keyword>
<keyword id="KW-0963">Cytoplasm</keyword>
<keyword id="KW-0903">Direct protein sequencing</keyword>
<keyword id="KW-0324">Glycolysis</keyword>
<keyword id="KW-0379">Hydroxylation</keyword>
<keyword id="KW-0418">Kinase</keyword>
<keyword id="KW-0460">Magnesium</keyword>
<keyword id="KW-0479">Metal-binding</keyword>
<keyword id="KW-0496">Mitochondrion</keyword>
<keyword id="KW-0547">Nucleotide-binding</keyword>
<keyword id="KW-0597">Phosphoprotein</keyword>
<keyword id="KW-1185">Reference proteome</keyword>
<keyword id="KW-0808">Transferase</keyword>
<evidence type="ECO:0000250" key="1"/>
<evidence type="ECO:0000250" key="2">
    <source>
        <dbReference type="UniProtKB" id="P00558"/>
    </source>
</evidence>
<evidence type="ECO:0000250" key="3">
    <source>
        <dbReference type="UniProtKB" id="P09411"/>
    </source>
</evidence>
<evidence type="ECO:0000250" key="4">
    <source>
        <dbReference type="UniProtKB" id="Q7SIB7"/>
    </source>
</evidence>
<evidence type="ECO:0000305" key="5"/>
<evidence type="ECO:0007744" key="6">
    <source>
    </source>
</evidence>
<protein>
    <recommendedName>
        <fullName>Phosphoglycerate kinase 1</fullName>
        <ecNumber evidence="2">2.7.11.1</ecNumber>
        <ecNumber evidence="2">2.7.2.3</ecNumber>
    </recommendedName>
</protein>
<comment type="function">
    <text evidence="2">Catalyzes one of the two ATP producing reactions in the glycolytic pathway via the reversible conversion of 1,3-diphosphoglycerate to 3-phosphoglycerate. Both L- and D- forms of purine and pyrimidine nucleotides can be used as substrates, but the activity is much lower on pyrimidines. In addition to its role as a glycolytic enzyme, it seems that PGK-1 acts as a polymerase alpha cofactor protein (primer recognition protein). Acts as a protein kinase when localized to the mitochondrion where it phosphorylates pyruvate dehydrogenase kinase PDK1 to inhibit pyruvate dehydrogenase complex activity and suppress the formation of acetyl-coenzyme A from pyruvate, and consequently inhibit oxidative phosphorylation and promote glycolysis. May play a role in sperm motility.</text>
</comment>
<comment type="catalytic activity">
    <reaction evidence="2">
        <text>(2R)-3-phosphoglycerate + ATP = (2R)-3-phospho-glyceroyl phosphate + ADP</text>
        <dbReference type="Rhea" id="RHEA:14801"/>
        <dbReference type="ChEBI" id="CHEBI:30616"/>
        <dbReference type="ChEBI" id="CHEBI:57604"/>
        <dbReference type="ChEBI" id="CHEBI:58272"/>
        <dbReference type="ChEBI" id="CHEBI:456216"/>
        <dbReference type="EC" id="2.7.2.3"/>
    </reaction>
</comment>
<comment type="catalytic activity">
    <reaction evidence="2">
        <text>L-seryl-[protein] + ATP = O-phospho-L-seryl-[protein] + ADP + H(+)</text>
        <dbReference type="Rhea" id="RHEA:17989"/>
        <dbReference type="Rhea" id="RHEA-COMP:9863"/>
        <dbReference type="Rhea" id="RHEA-COMP:11604"/>
        <dbReference type="ChEBI" id="CHEBI:15378"/>
        <dbReference type="ChEBI" id="CHEBI:29999"/>
        <dbReference type="ChEBI" id="CHEBI:30616"/>
        <dbReference type="ChEBI" id="CHEBI:83421"/>
        <dbReference type="ChEBI" id="CHEBI:456216"/>
        <dbReference type="EC" id="2.7.11.1"/>
    </reaction>
</comment>
<comment type="cofactor">
    <cofactor evidence="2">
        <name>Mg(2+)</name>
        <dbReference type="ChEBI" id="CHEBI:18420"/>
    </cofactor>
</comment>
<comment type="pathway">
    <text evidence="2">Carbohydrate degradation; glycolysis; pyruvate from D-glyceraldehyde 3-phosphate: step 2/5.</text>
</comment>
<comment type="subunit">
    <text evidence="2">Monomer. Interacts with kinase MAPK1/ERK2; the interaction is direct, occurs under hypoxic conditions, and promotes its interaction with PIN1. Interacts with peptidyl-prolyl cis-trans isomerase PIN1; the interaction is direct, occurs under hypoxic conditions, and targets the protein to the mitochondrion by promoting interactions with the TOM complex. Interacts with mitochondrial circRNA mcPGK1 (via its 2nd stem-loop); the interaction is direct and targets the protein to the mitochondrion by promoting interactions with the TOM complex. Interacts with pyruvate dehydrogenase kinase PDK1; the interaction is direct, occurs under hypoxic conditions and leads to PDK1-mediated inhibition of pyruvate dehydrogenase complex activity.</text>
</comment>
<comment type="subcellular location">
    <subcellularLocation>
        <location evidence="2">Cytoplasm</location>
        <location evidence="2">Cytosol</location>
    </subcellularLocation>
    <subcellularLocation>
        <location evidence="2">Mitochondrion matrix</location>
    </subcellularLocation>
    <text evidence="2">Hypoxic conditions promote mitochondrial targeting. Targeted to the mitochondrion following phosphorylation by MAPK1/ERK2, cis-trans isomerization by PIN1, and binding to mitochondrial circRNA mcPGK1.</text>
</comment>
<comment type="PTM">
    <text evidence="2">Phosphorylated at Ser-203 by MAPK1/ERK2 under hypoxic conditions, which promotes its mitochondrial targeting.</text>
</comment>
<comment type="similarity">
    <text evidence="5">Belongs to the phosphoglycerate kinase family.</text>
</comment>
<sequence length="417" mass="44538">MSLSNKLTLDKLDVKGKRVVMRVDFNVPMKNNQITNNQRIKAAVPSIKFCLDNGAKSVVLMSHLGRPDGVPMPDKYSLEPVAAELKSLLGKDVLFLKDCVGSEVENACANPAAGTVILLENLRFHVEEEGKGKDASGNKVKAEPAKIDAFRASLSKLGDVYVNDAFGTAHRAHSSMVGVNLPQKAGGFLMKKELNYFAKALESPERPFLAILGGAKVADKIQLINNMLDKVNEMIIGGGMAFTFLKVLNNMEIGTSLYDEEGAKIVKDLMAKAEKNGVKITLPVDFVTADKFDENAKTGQATVASGIPAGWMGLDCGTESSKKYAEAVARAKQIVWNGPVGVFEWEAFARGTKSLMDEVVKATSRGCITIIGGGDTATCCAKWNTEDKVSHVSTGGGASLELLEGKVLPGVDALSNV</sequence>
<organism>
    <name type="scientific">Rattus norvegicus</name>
    <name type="common">Rat</name>
    <dbReference type="NCBI Taxonomy" id="10116"/>
    <lineage>
        <taxon>Eukaryota</taxon>
        <taxon>Metazoa</taxon>
        <taxon>Chordata</taxon>
        <taxon>Craniata</taxon>
        <taxon>Vertebrata</taxon>
        <taxon>Euteleostomi</taxon>
        <taxon>Mammalia</taxon>
        <taxon>Eutheria</taxon>
        <taxon>Euarchontoglires</taxon>
        <taxon>Glires</taxon>
        <taxon>Rodentia</taxon>
        <taxon>Myomorpha</taxon>
        <taxon>Muroidea</taxon>
        <taxon>Muridae</taxon>
        <taxon>Murinae</taxon>
        <taxon>Rattus</taxon>
    </lineage>
</organism>
<reference key="1">
    <citation type="journal article" date="1989" name="Biochem. Biophys. Res. Commun.">
        <title>Cloning and cDNA sequence of the rat X-chromosome linked phosphoglycerate kinase.</title>
        <authorList>
            <person name="Ciccarese S."/>
            <person name="Tommasi S."/>
            <person name="Vonghia G."/>
        </authorList>
    </citation>
    <scope>NUCLEOTIDE SEQUENCE [MRNA]</scope>
</reference>
<reference key="2">
    <citation type="journal article" date="2004" name="Genome Res.">
        <title>The status, quality, and expansion of the NIH full-length cDNA project: the Mammalian Gene Collection (MGC).</title>
        <authorList>
            <consortium name="The MGC Project Team"/>
        </authorList>
    </citation>
    <scope>NUCLEOTIDE SEQUENCE [LARGE SCALE MRNA]</scope>
    <source>
        <tissue>Ovary</tissue>
        <tissue>Pituitary</tissue>
    </source>
</reference>
<reference key="3">
    <citation type="submission" date="2007-04" db="UniProtKB">
        <authorList>
            <person name="Lubec G."/>
            <person name="Afjehi-Sadat L."/>
            <person name="Diao W."/>
        </authorList>
    </citation>
    <scope>PROTEIN SEQUENCE OF 98-123; 157-171; 200-216; 280-297 AND 333-350</scope>
    <scope>IDENTIFICATION BY MASS SPECTROMETRY</scope>
    <source>
        <strain>Sprague-Dawley</strain>
        <tissue>Hippocampus</tissue>
        <tissue>Spinal cord</tissue>
    </source>
</reference>
<reference key="4">
    <citation type="journal article" date="2012" name="Nat. Commun.">
        <title>Quantitative maps of protein phosphorylation sites across 14 different rat organs and tissues.</title>
        <authorList>
            <person name="Lundby A."/>
            <person name="Secher A."/>
            <person name="Lage K."/>
            <person name="Nordsborg N.B."/>
            <person name="Dmytriyev A."/>
            <person name="Lundby C."/>
            <person name="Olsen J.V."/>
        </authorList>
    </citation>
    <scope>PHOSPHORYLATION [LARGE SCALE ANALYSIS] AT SER-354</scope>
    <scope>IDENTIFICATION BY MASS SPECTROMETRY [LARGE SCALE ANALYSIS]</scope>
</reference>
<proteinExistence type="evidence at protein level"/>
<name>PGK1_RAT</name>
<feature type="initiator methionine" description="Removed" evidence="2">
    <location>
        <position position="1"/>
    </location>
</feature>
<feature type="chain" id="PRO_0000145840" description="Phosphoglycerate kinase 1">
    <location>
        <begin position="2"/>
        <end position="417"/>
    </location>
</feature>
<feature type="region of interest" description="Mitochondrial targeting region exposed following cis-trans isomerization by PIN1 and recognized by the TOM complex for mitochondrial translocation of the protein" evidence="2">
    <location>
        <begin position="38"/>
        <end position="43"/>
    </location>
</feature>
<feature type="binding site" evidence="2">
    <location>
        <position position="23"/>
    </location>
    <ligand>
        <name>(2R)-3-phosphoglycerate</name>
        <dbReference type="ChEBI" id="CHEBI:58272"/>
    </ligand>
</feature>
<feature type="binding site" evidence="4">
    <location>
        <position position="24"/>
    </location>
    <ligand>
        <name>(2R)-3-phosphoglycerate</name>
        <dbReference type="ChEBI" id="CHEBI:58272"/>
    </ligand>
</feature>
<feature type="binding site" evidence="2">
    <location>
        <position position="25"/>
    </location>
    <ligand>
        <name>(2R)-3-phosphoglycerate</name>
        <dbReference type="ChEBI" id="CHEBI:58272"/>
    </ligand>
</feature>
<feature type="binding site" evidence="4">
    <location>
        <position position="26"/>
    </location>
    <ligand>
        <name>(2R)-3-phosphoglycerate</name>
        <dbReference type="ChEBI" id="CHEBI:58272"/>
    </ligand>
</feature>
<feature type="binding site" evidence="2">
    <location>
        <position position="38"/>
    </location>
    <ligand>
        <name>(2R)-3-phosphoglycerate</name>
        <dbReference type="ChEBI" id="CHEBI:58272"/>
    </ligand>
</feature>
<feature type="binding site" evidence="4">
    <location>
        <position position="39"/>
    </location>
    <ligand>
        <name>(2R)-3-phosphoglycerate</name>
        <dbReference type="ChEBI" id="CHEBI:58272"/>
    </ligand>
</feature>
<feature type="binding site" evidence="2">
    <location>
        <position position="62"/>
    </location>
    <ligand>
        <name>(2R)-3-phosphoglycerate</name>
        <dbReference type="ChEBI" id="CHEBI:58272"/>
    </ligand>
</feature>
<feature type="binding site" evidence="4">
    <location>
        <position position="63"/>
    </location>
    <ligand>
        <name>(2R)-3-phosphoglycerate</name>
        <dbReference type="ChEBI" id="CHEBI:58272"/>
    </ligand>
</feature>
<feature type="binding site" evidence="2">
    <location>
        <position position="65"/>
    </location>
    <ligand>
        <name>(2R)-3-phosphoglycerate</name>
        <dbReference type="ChEBI" id="CHEBI:58272"/>
    </ligand>
</feature>
<feature type="binding site" evidence="4">
    <location>
        <position position="66"/>
    </location>
    <ligand>
        <name>(2R)-3-phosphoglycerate</name>
        <dbReference type="ChEBI" id="CHEBI:58272"/>
    </ligand>
</feature>
<feature type="binding site" evidence="2">
    <location>
        <position position="122"/>
    </location>
    <ligand>
        <name>(2R)-3-phosphoglycerate</name>
        <dbReference type="ChEBI" id="CHEBI:58272"/>
    </ligand>
</feature>
<feature type="binding site" evidence="4">
    <location>
        <position position="123"/>
    </location>
    <ligand>
        <name>(2R)-3-phosphoglycerate</name>
        <dbReference type="ChEBI" id="CHEBI:58272"/>
    </ligand>
</feature>
<feature type="binding site" evidence="2">
    <location>
        <position position="170"/>
    </location>
    <ligand>
        <name>(2R)-3-phosphoglycerate</name>
        <dbReference type="ChEBI" id="CHEBI:58272"/>
    </ligand>
</feature>
<feature type="binding site" evidence="4">
    <location>
        <position position="171"/>
    </location>
    <ligand>
        <name>(2R)-3-phosphoglycerate</name>
        <dbReference type="ChEBI" id="CHEBI:58272"/>
    </ligand>
</feature>
<feature type="binding site" evidence="2">
    <location>
        <position position="214"/>
    </location>
    <ligand>
        <name>ADP</name>
        <dbReference type="ChEBI" id="CHEBI:456216"/>
    </ligand>
</feature>
<feature type="binding site" evidence="2">
    <location>
        <position position="214"/>
    </location>
    <ligand>
        <name>CDP</name>
        <dbReference type="ChEBI" id="CHEBI:58069"/>
    </ligand>
</feature>
<feature type="binding site" evidence="4">
    <location>
        <position position="215"/>
    </location>
    <ligand>
        <name>AMP</name>
        <dbReference type="ChEBI" id="CHEBI:456215"/>
    </ligand>
</feature>
<feature type="binding site" evidence="4">
    <location>
        <position position="215"/>
    </location>
    <ligand>
        <name>ATP</name>
        <dbReference type="ChEBI" id="CHEBI:30616"/>
    </ligand>
</feature>
<feature type="binding site" evidence="2">
    <location>
        <position position="215"/>
    </location>
    <ligand>
        <name>Mg(2+)</name>
        <dbReference type="ChEBI" id="CHEBI:18420"/>
    </ligand>
</feature>
<feature type="binding site" evidence="4">
    <location>
        <position position="216"/>
    </location>
    <ligand>
        <name>AMP</name>
        <dbReference type="ChEBI" id="CHEBI:456215"/>
    </ligand>
</feature>
<feature type="binding site" evidence="2">
    <location>
        <position position="218"/>
    </location>
    <ligand>
        <name>Mg(2+)</name>
        <dbReference type="ChEBI" id="CHEBI:18420"/>
    </ligand>
</feature>
<feature type="binding site" evidence="2">
    <location>
        <position position="219"/>
    </location>
    <ligand>
        <name>CDP</name>
        <dbReference type="ChEBI" id="CHEBI:58069"/>
    </ligand>
</feature>
<feature type="binding site" evidence="2">
    <location>
        <position position="219"/>
    </location>
    <ligand>
        <name>Mg(2+)</name>
        <dbReference type="ChEBI" id="CHEBI:18420"/>
    </ligand>
</feature>
<feature type="binding site" evidence="4">
    <location>
        <position position="220"/>
    </location>
    <ligand>
        <name>AMP</name>
        <dbReference type="ChEBI" id="CHEBI:456215"/>
    </ligand>
</feature>
<feature type="binding site" evidence="4">
    <location>
        <position position="220"/>
    </location>
    <ligand>
        <name>ATP</name>
        <dbReference type="ChEBI" id="CHEBI:30616"/>
    </ligand>
</feature>
<feature type="binding site" evidence="2">
    <location>
        <position position="238"/>
    </location>
    <ligand>
        <name>ADP</name>
        <dbReference type="ChEBI" id="CHEBI:456216"/>
    </ligand>
</feature>
<feature type="binding site" evidence="2">
    <location>
        <position position="238"/>
    </location>
    <ligand>
        <name>CDP</name>
        <dbReference type="ChEBI" id="CHEBI:58069"/>
    </ligand>
</feature>
<feature type="binding site" evidence="4">
    <location>
        <position position="239"/>
    </location>
    <ligand>
        <name>AMP</name>
        <dbReference type="ChEBI" id="CHEBI:456215"/>
    </ligand>
</feature>
<feature type="binding site" evidence="4">
    <location>
        <position position="239"/>
    </location>
    <ligand>
        <name>ATP</name>
        <dbReference type="ChEBI" id="CHEBI:30616"/>
    </ligand>
</feature>
<feature type="binding site" evidence="4">
    <location>
        <position position="313"/>
    </location>
    <ligand>
        <name>AMP</name>
        <dbReference type="ChEBI" id="CHEBI:456215"/>
    </ligand>
</feature>
<feature type="binding site" evidence="4">
    <location>
        <position position="313"/>
    </location>
    <ligand>
        <name>ATP</name>
        <dbReference type="ChEBI" id="CHEBI:30616"/>
    </ligand>
</feature>
<feature type="binding site" evidence="2">
    <location>
        <position position="338"/>
    </location>
    <ligand>
        <name>CDP</name>
        <dbReference type="ChEBI" id="CHEBI:58069"/>
    </ligand>
</feature>
<feature type="binding site" evidence="2">
    <location>
        <position position="340"/>
    </location>
    <ligand>
        <name>CDP</name>
        <dbReference type="ChEBI" id="CHEBI:58069"/>
    </ligand>
</feature>
<feature type="binding site" evidence="2">
    <location>
        <position position="343"/>
    </location>
    <ligand>
        <name>ADP</name>
        <dbReference type="ChEBI" id="CHEBI:456216"/>
    </ligand>
</feature>
<feature type="binding site" evidence="2">
    <location>
        <position position="343"/>
    </location>
    <ligand>
        <name>CDP</name>
        <dbReference type="ChEBI" id="CHEBI:58069"/>
    </ligand>
</feature>
<feature type="binding site" evidence="4">
    <location>
        <position position="344"/>
    </location>
    <ligand>
        <name>AMP</name>
        <dbReference type="ChEBI" id="CHEBI:456215"/>
    </ligand>
</feature>
<feature type="binding site" evidence="4">
    <location>
        <position position="344"/>
    </location>
    <ligand>
        <name>ATP</name>
        <dbReference type="ChEBI" id="CHEBI:30616"/>
    </ligand>
</feature>
<feature type="binding site" evidence="4">
    <location>
        <position position="375"/>
    </location>
    <ligand>
        <name>ATP</name>
        <dbReference type="ChEBI" id="CHEBI:30616"/>
    </ligand>
</feature>
<feature type="binding site" evidence="4">
    <location>
        <position position="375"/>
    </location>
    <ligand>
        <name>Mg(2+)</name>
        <dbReference type="ChEBI" id="CHEBI:18420"/>
    </ligand>
</feature>
<feature type="binding site" evidence="4">
    <location>
        <position position="376"/>
    </location>
    <ligand>
        <name>ATP</name>
        <dbReference type="ChEBI" id="CHEBI:30616"/>
    </ligand>
</feature>
<feature type="modified residue" description="N-acetylserine" evidence="2">
    <location>
        <position position="2"/>
    </location>
</feature>
<feature type="modified residue" description="Phosphoserine" evidence="2">
    <location>
        <position position="2"/>
    </location>
</feature>
<feature type="modified residue" description="Phosphoserine" evidence="2">
    <location>
        <position position="4"/>
    </location>
</feature>
<feature type="modified residue" description="N6-succinyllysine" evidence="3">
    <location>
        <position position="6"/>
    </location>
</feature>
<feature type="modified residue" description="N6-acetyllysine" evidence="2">
    <location>
        <position position="11"/>
    </location>
</feature>
<feature type="modified residue" description="N6-acetyllysine; alternate" evidence="2">
    <location>
        <position position="48"/>
    </location>
</feature>
<feature type="modified residue" description="N6-succinyllysine; alternate" evidence="3">
    <location>
        <position position="48"/>
    </location>
</feature>
<feature type="modified residue" description="N6-acetyllysine" evidence="2">
    <location>
        <position position="75"/>
    </location>
</feature>
<feature type="modified residue" description="Phosphotyrosine" evidence="3">
    <location>
        <position position="76"/>
    </location>
</feature>
<feature type="modified residue" description="N6-acetyllysine" evidence="2">
    <location>
        <position position="86"/>
    </location>
</feature>
<feature type="modified residue" description="N6-acetyllysine" evidence="3">
    <location>
        <position position="91"/>
    </location>
</feature>
<feature type="modified residue" description="N6-(2-hydroxyisobutyryl)lysine; alternate" evidence="2">
    <location>
        <position position="97"/>
    </location>
</feature>
<feature type="modified residue" description="N6-acetyllysine; alternate" evidence="2">
    <location>
        <position position="97"/>
    </location>
</feature>
<feature type="modified residue" description="N6-acetyllysine; alternate" evidence="2">
    <location>
        <position position="131"/>
    </location>
</feature>
<feature type="modified residue" description="N6-malonyllysine; alternate" evidence="1">
    <location>
        <position position="131"/>
    </location>
</feature>
<feature type="modified residue" description="N6-acetyllysine" evidence="2">
    <location>
        <position position="146"/>
    </location>
</feature>
<feature type="modified residue" description="N6-succinyllysine" evidence="3">
    <location>
        <position position="191"/>
    </location>
</feature>
<feature type="modified residue" description="Phosphotyrosine" evidence="2">
    <location>
        <position position="196"/>
    </location>
</feature>
<feature type="modified residue" description="N6-acetyllysine" evidence="2">
    <location>
        <position position="199"/>
    </location>
</feature>
<feature type="modified residue" description="Phosphoserine" evidence="2">
    <location>
        <position position="203"/>
    </location>
</feature>
<feature type="modified residue" description="N6-(2-hydroxyisobutyryl)lysine" evidence="2">
    <location>
        <position position="216"/>
    </location>
</feature>
<feature type="modified residue" description="N6-(2-hydroxyisobutyryl)lysine" evidence="2">
    <location>
        <position position="220"/>
    </location>
</feature>
<feature type="modified residue" description="N6-acetyllysine" evidence="2">
    <location>
        <position position="267"/>
    </location>
</feature>
<feature type="modified residue" description="N6-acetyllysine" evidence="2">
    <location>
        <position position="291"/>
    </location>
</feature>
<feature type="modified residue" description="N6-(2-hydroxyisobutyryl)lysine" evidence="2">
    <location>
        <position position="323"/>
    </location>
</feature>
<feature type="modified residue" description="Phosphoserine" evidence="6">
    <location>
        <position position="354"/>
    </location>
</feature>
<feature type="modified residue" description="N6-acetyllysine" evidence="3">
    <location>
        <position position="361"/>
    </location>
</feature>
<feature type="sequence conflict" description="In Ref. 1; AAA41838." evidence="5" ref="1">
    <original>K</original>
    <variation>N</variation>
    <location>
        <position position="56"/>
    </location>
</feature>
<feature type="sequence conflict" description="In Ref. 1; AAA41838." evidence="5" ref="1">
    <original>A</original>
    <variation>T</variation>
    <location>
        <position position="271"/>
    </location>
</feature>
<gene>
    <name type="primary">Pgk1</name>
    <name type="synonym">Pgk-1</name>
</gene>
<accession>P16617</accession>
<accession>Q5M945</accession>
<accession>Q6P508</accession>